<keyword id="KW-0049">Antioxidant</keyword>
<keyword id="KW-1015">Disulfide bond</keyword>
<keyword id="KW-0560">Oxidoreductase</keyword>
<keyword id="KW-0575">Peroxidase</keyword>
<keyword id="KW-0676">Redox-active center</keyword>
<gene>
    <name evidence="2" type="primary">tpx</name>
</gene>
<evidence type="ECO:0000250" key="1"/>
<evidence type="ECO:0000255" key="2">
    <source>
        <dbReference type="HAMAP-Rule" id="MF_00269"/>
    </source>
</evidence>
<sequence length="163" mass="17912">MTTFLGNPVTFTGKQLQVGDTAHDFSLTATDLSKKTLADFAGKKKVLSIIPSIDTGVCSTQTRRFNQELSDLDNTVVITVSVDLPFAQGKWCAAEGIENAVMLSDYFDHSFGRDYAVLINEWHLLARAVLVLDENNTVTYAEYVDNINTEPDYDAAIAAVKNL</sequence>
<reference key="1">
    <citation type="journal article" date="1994" name="Infect. Immun.">
        <title>Nucleotide sequence of the Streptococcus gordonii PK488 coaggregation adhesin gene, scaA, and ATP-binding cassette.</title>
        <authorList>
            <person name="Kolenbrander P.E."/>
            <person name="Andersen R.N."/>
            <person name="Ganeshkumar N."/>
        </authorList>
    </citation>
    <scope>NUCLEOTIDE SEQUENCE [GENOMIC DNA]</scope>
    <source>
        <strain>ATCC 51656 / PK488</strain>
    </source>
</reference>
<protein>
    <recommendedName>
        <fullName evidence="2">Thiol peroxidase</fullName>
        <shortName evidence="2">Tpx</shortName>
        <ecNumber evidence="2">1.11.1.24</ecNumber>
    </recommendedName>
    <alternativeName>
        <fullName evidence="2">Peroxiredoxin tpx</fullName>
        <shortName evidence="2">Prx</shortName>
    </alternativeName>
    <alternativeName>
        <fullName evidence="2">Thioredoxin peroxidase</fullName>
    </alternativeName>
    <alternativeName>
        <fullName evidence="2">Thioredoxin-dependent peroxiredoxin</fullName>
    </alternativeName>
</protein>
<organism>
    <name type="scientific">Streptococcus gordonii</name>
    <dbReference type="NCBI Taxonomy" id="1302"/>
    <lineage>
        <taxon>Bacteria</taxon>
        <taxon>Bacillati</taxon>
        <taxon>Bacillota</taxon>
        <taxon>Bacilli</taxon>
        <taxon>Lactobacillales</taxon>
        <taxon>Streptococcaceae</taxon>
        <taxon>Streptococcus</taxon>
    </lineage>
</organism>
<name>TPX_STRGN</name>
<feature type="initiator methionine" description="Removed" evidence="1">
    <location>
        <position position="1"/>
    </location>
</feature>
<feature type="chain" id="PRO_0000187910" description="Thiol peroxidase">
    <location>
        <begin position="2"/>
        <end position="163"/>
    </location>
</feature>
<feature type="domain" description="Thioredoxin" evidence="2">
    <location>
        <begin position="16"/>
        <end position="162"/>
    </location>
</feature>
<feature type="active site" description="Cysteine sulfenic acid (-SOH) intermediate" evidence="2">
    <location>
        <position position="58"/>
    </location>
</feature>
<feature type="disulfide bond" description="Redox-active" evidence="2">
    <location>
        <begin position="58"/>
        <end position="92"/>
    </location>
</feature>
<dbReference type="EC" id="1.11.1.24" evidence="2"/>
<dbReference type="EMBL" id="L11577">
    <property type="protein sequence ID" value="AAA71948.1"/>
    <property type="molecule type" value="Genomic_DNA"/>
</dbReference>
<dbReference type="PIR" id="T11552">
    <property type="entry name" value="T11552"/>
</dbReference>
<dbReference type="RefSeq" id="WP_012130838.1">
    <property type="nucleotide sequence ID" value="NZ_RJVY01000008.1"/>
</dbReference>
<dbReference type="SMR" id="P42366"/>
<dbReference type="GeneID" id="93788082"/>
<dbReference type="OMA" id="ITQEPNY"/>
<dbReference type="OrthoDB" id="9781543at2"/>
<dbReference type="GO" id="GO:0008379">
    <property type="term" value="F:thioredoxin peroxidase activity"/>
    <property type="evidence" value="ECO:0007669"/>
    <property type="project" value="UniProtKB-UniRule"/>
</dbReference>
<dbReference type="CDD" id="cd03014">
    <property type="entry name" value="PRX_Atyp2cys"/>
    <property type="match status" value="1"/>
</dbReference>
<dbReference type="Gene3D" id="3.40.30.10">
    <property type="entry name" value="Glutaredoxin"/>
    <property type="match status" value="1"/>
</dbReference>
<dbReference type="HAMAP" id="MF_00269">
    <property type="entry name" value="Tpx"/>
    <property type="match status" value="1"/>
</dbReference>
<dbReference type="InterPro" id="IPR013740">
    <property type="entry name" value="Redoxin"/>
</dbReference>
<dbReference type="InterPro" id="IPR036249">
    <property type="entry name" value="Thioredoxin-like_sf"/>
</dbReference>
<dbReference type="InterPro" id="IPR013766">
    <property type="entry name" value="Thioredoxin_domain"/>
</dbReference>
<dbReference type="InterPro" id="IPR002065">
    <property type="entry name" value="TPX"/>
</dbReference>
<dbReference type="InterPro" id="IPR018219">
    <property type="entry name" value="Tpx_CS"/>
</dbReference>
<dbReference type="InterPro" id="IPR050455">
    <property type="entry name" value="Tpx_Peroxidase_subfamily"/>
</dbReference>
<dbReference type="NCBIfam" id="NF001808">
    <property type="entry name" value="PRK00522.1"/>
    <property type="match status" value="1"/>
</dbReference>
<dbReference type="PANTHER" id="PTHR43110">
    <property type="entry name" value="THIOL PEROXIDASE"/>
    <property type="match status" value="1"/>
</dbReference>
<dbReference type="PANTHER" id="PTHR43110:SF1">
    <property type="entry name" value="THIOL PEROXIDASE"/>
    <property type="match status" value="1"/>
</dbReference>
<dbReference type="Pfam" id="PF08534">
    <property type="entry name" value="Redoxin"/>
    <property type="match status" value="1"/>
</dbReference>
<dbReference type="SUPFAM" id="SSF52833">
    <property type="entry name" value="Thioredoxin-like"/>
    <property type="match status" value="1"/>
</dbReference>
<dbReference type="PROSITE" id="PS51352">
    <property type="entry name" value="THIOREDOXIN_2"/>
    <property type="match status" value="1"/>
</dbReference>
<dbReference type="PROSITE" id="PS01265">
    <property type="entry name" value="TPX"/>
    <property type="match status" value="1"/>
</dbReference>
<accession>P42366</accession>
<comment type="function">
    <text evidence="2">Thiol-specific peroxidase that catalyzes the reduction of hydrogen peroxide and organic hydroperoxides to water and alcohols, respectively. Plays a role in cell protection against oxidative stress by detoxifying peroxides.</text>
</comment>
<comment type="catalytic activity">
    <reaction evidence="2">
        <text>a hydroperoxide + [thioredoxin]-dithiol = an alcohol + [thioredoxin]-disulfide + H2O</text>
        <dbReference type="Rhea" id="RHEA:62620"/>
        <dbReference type="Rhea" id="RHEA-COMP:10698"/>
        <dbReference type="Rhea" id="RHEA-COMP:10700"/>
        <dbReference type="ChEBI" id="CHEBI:15377"/>
        <dbReference type="ChEBI" id="CHEBI:29950"/>
        <dbReference type="ChEBI" id="CHEBI:30879"/>
        <dbReference type="ChEBI" id="CHEBI:35924"/>
        <dbReference type="ChEBI" id="CHEBI:50058"/>
        <dbReference type="EC" id="1.11.1.24"/>
    </reaction>
</comment>
<comment type="subunit">
    <text evidence="2">Homodimer.</text>
</comment>
<comment type="miscellaneous">
    <text evidence="2">The active site is a conserved redox-active cysteine residue, the peroxidatic cysteine (C(P)), which makes the nucleophilic attack on the peroxide substrate. The peroxide oxidizes the C(P)-SH to cysteine sulfenic acid (C(P)-SOH), which then reacts with another cysteine residue, the resolving cysteine (C(R)), to form a disulfide bridge. The disulfide is subsequently reduced by an appropriate electron donor to complete the catalytic cycle. In this atypical 2-Cys peroxiredoxin, C(R) is present in the same subunit to form an intramolecular disulfide. The disulfide is subsequently reduced by thioredoxin.</text>
</comment>
<comment type="similarity">
    <text evidence="2">Belongs to the peroxiredoxin family. Tpx subfamily.</text>
</comment>
<proteinExistence type="inferred from homology"/>